<dbReference type="EMBL" id="X68779">
    <property type="protein sequence ID" value="CAA48679.1"/>
    <property type="molecule type" value="mRNA"/>
</dbReference>
<dbReference type="PIR" id="S33509">
    <property type="entry name" value="S33509"/>
</dbReference>
<dbReference type="SMR" id="Q08081"/>
<dbReference type="GlyCosmos" id="Q08081">
    <property type="glycosylation" value="1 site, No reported glycans"/>
</dbReference>
<dbReference type="Ensembl" id="ENSMUGT00000021618">
    <property type="protein sequence ID" value="ENSMUGP00000018773"/>
    <property type="gene ID" value="ENSMUGG00000015917"/>
</dbReference>
<dbReference type="OrthoDB" id="9450228at2759"/>
<dbReference type="GO" id="GO:0005615">
    <property type="term" value="C:extracellular space"/>
    <property type="evidence" value="ECO:0007669"/>
    <property type="project" value="UniProtKB-KW"/>
</dbReference>
<dbReference type="GO" id="GO:0005125">
    <property type="term" value="F:cytokine activity"/>
    <property type="evidence" value="ECO:0007669"/>
    <property type="project" value="UniProtKB-KW"/>
</dbReference>
<dbReference type="GO" id="GO:0008083">
    <property type="term" value="F:growth factor activity"/>
    <property type="evidence" value="ECO:0007669"/>
    <property type="project" value="UniProtKB-KW"/>
</dbReference>
<dbReference type="GO" id="GO:0005134">
    <property type="term" value="F:interleukin-2 receptor binding"/>
    <property type="evidence" value="ECO:0007669"/>
    <property type="project" value="InterPro"/>
</dbReference>
<dbReference type="GO" id="GO:0002250">
    <property type="term" value="P:adaptive immune response"/>
    <property type="evidence" value="ECO:0007669"/>
    <property type="project" value="UniProtKB-KW"/>
</dbReference>
<dbReference type="Gene3D" id="1.20.1250.10">
    <property type="match status" value="1"/>
</dbReference>
<dbReference type="InterPro" id="IPR009079">
    <property type="entry name" value="4_helix_cytokine-like_core"/>
</dbReference>
<dbReference type="InterPro" id="IPR000779">
    <property type="entry name" value="IL-2"/>
</dbReference>
<dbReference type="InterPro" id="IPR030477">
    <property type="entry name" value="IL-2_CS"/>
</dbReference>
<dbReference type="PANTHER" id="PTHR48487">
    <property type="entry name" value="INTERLEUKIN-2"/>
    <property type="match status" value="1"/>
</dbReference>
<dbReference type="PANTHER" id="PTHR48487:SF1">
    <property type="entry name" value="INTERLEUKIN-2"/>
    <property type="match status" value="1"/>
</dbReference>
<dbReference type="Pfam" id="PF00715">
    <property type="entry name" value="IL2"/>
    <property type="match status" value="1"/>
</dbReference>
<dbReference type="PRINTS" id="PR00265">
    <property type="entry name" value="INTERLEUKIN2"/>
</dbReference>
<dbReference type="SMART" id="SM00189">
    <property type="entry name" value="IL2"/>
    <property type="match status" value="1"/>
</dbReference>
<dbReference type="SUPFAM" id="SSF47266">
    <property type="entry name" value="4-helical cytokines"/>
    <property type="match status" value="1"/>
</dbReference>
<dbReference type="PROSITE" id="PS00424">
    <property type="entry name" value="INTERLEUKIN_2"/>
    <property type="match status" value="1"/>
</dbReference>
<reference key="1">
    <citation type="journal article" date="1994" name="Vet. Immunol. Immunopathol.">
        <title>Cross-species PCR cloning of gerbil (Meriones unguiculatus) interleukin-2 cDNA and its expression in COS-7 cells.</title>
        <authorList>
            <person name="Mai Z."/>
            <person name="Kousoulas K.G."/>
            <person name="Horohov D.W."/>
            <person name="Klei T.R."/>
        </authorList>
    </citation>
    <scope>NUCLEOTIDE SEQUENCE [MRNA]</scope>
    <source>
        <tissue>Spleen</tissue>
    </source>
</reference>
<feature type="signal peptide" evidence="1">
    <location>
        <begin position="1"/>
        <end position="20"/>
    </location>
</feature>
<feature type="chain" id="PRO_0000015490" description="Interleukin-2">
    <location>
        <begin position="21"/>
        <end position="155"/>
    </location>
</feature>
<feature type="glycosylation site" description="O-linked (GalNAc...) threonine" evidence="1">
    <location>
        <position position="23"/>
    </location>
</feature>
<feature type="disulfide bond" evidence="1">
    <location>
        <begin position="78"/>
        <end position="126"/>
    </location>
</feature>
<accession>Q08081</accession>
<sequence length="155" mass="17602">MYSRQLASCVALALVLLANSAPTSSPAKEAQQYLEQLLLDLQQLLRGINNYKNPKLPMLLTFKFYMPRKATELKHLQCLEEELGPLHDVLNLVQSKNLYLEDAGNFISNIRVTVMKLKGSENTLNCEFDDETVTVVEFLSRWITFCQSAISTMTQ</sequence>
<organism>
    <name type="scientific">Meriones unguiculatus</name>
    <name type="common">Mongolian jird</name>
    <name type="synonym">Gerbillus unguiculatus</name>
    <dbReference type="NCBI Taxonomy" id="10047"/>
    <lineage>
        <taxon>Eukaryota</taxon>
        <taxon>Metazoa</taxon>
        <taxon>Chordata</taxon>
        <taxon>Craniata</taxon>
        <taxon>Vertebrata</taxon>
        <taxon>Euteleostomi</taxon>
        <taxon>Mammalia</taxon>
        <taxon>Eutheria</taxon>
        <taxon>Euarchontoglires</taxon>
        <taxon>Glires</taxon>
        <taxon>Rodentia</taxon>
        <taxon>Myomorpha</taxon>
        <taxon>Muroidea</taxon>
        <taxon>Muridae</taxon>
        <taxon>Gerbillinae</taxon>
        <taxon>Meriones</taxon>
    </lineage>
</organism>
<protein>
    <recommendedName>
        <fullName>Interleukin-2</fullName>
        <shortName>IL-2</shortName>
    </recommendedName>
    <alternativeName>
        <fullName>T-cell growth factor</fullName>
        <shortName>TCGF</shortName>
    </alternativeName>
</protein>
<evidence type="ECO:0000250" key="1"/>
<evidence type="ECO:0000250" key="2">
    <source>
        <dbReference type="UniProtKB" id="P60568"/>
    </source>
</evidence>
<evidence type="ECO:0000305" key="3"/>
<comment type="function">
    <text evidence="2">Cytokine produced by activated CD4-positive helper T-cells and to a lesser extend activated CD8-positive T-cells and natural killer (NK) cells that plays pivotal roles in the immune response and tolerance. Binds to a receptor complex composed of either the high-affinity trimeric IL-2R (IL2RA/CD25, IL2RB/CD122 and IL2RG/CD132) or the low-affinity dimeric IL-2R (IL2RB and IL2RG). Interaction with the receptor leads to oligomerization and conformation changes in the IL-2R subunits resulting in downstream signaling starting with phosphorylation of JAK1 and JAK3. In turn, JAK1 and JAK3 phosphorylate the receptor to form a docking site leading to the phosphorylation of several substrates including STAT5. This process leads to activation of several pathways including STAT, phosphoinositide-3-kinase/PI3K and mitogen-activated protein kinase/MAPK pathways. Functions as a T-cell growth factor and can increase NK-cell cytolytic activity as well. Promotes strong proliferation of activated B-cells and subsequently immunoglobulin production. Plays a pivotal role in regulating the adaptive immune system by controlling the survival and proliferation of regulatory T-cells, which are required for the maintenance of immune tolerance. Moreover, participates in the differentiation and homeostasis of effector T-cell subsets, including Th1, Th2, Th17 as well as memory CD8-positive T-cells.</text>
</comment>
<comment type="subcellular location">
    <subcellularLocation>
        <location>Secreted</location>
    </subcellularLocation>
</comment>
<comment type="similarity">
    <text evidence="3">Belongs to the IL-2 family.</text>
</comment>
<gene>
    <name type="primary">IL2</name>
</gene>
<keyword id="KW-1064">Adaptive immunity</keyword>
<keyword id="KW-0202">Cytokine</keyword>
<keyword id="KW-1015">Disulfide bond</keyword>
<keyword id="KW-0325">Glycoprotein</keyword>
<keyword id="KW-0339">Growth factor</keyword>
<keyword id="KW-0391">Immunity</keyword>
<keyword id="KW-0964">Secreted</keyword>
<keyword id="KW-0732">Signal</keyword>
<proteinExistence type="evidence at transcript level"/>
<name>IL2_MERUN</name>